<gene>
    <name evidence="1" type="primary">dltA</name>
    <name type="ordered locus">MGAS10270_Spy1129</name>
</gene>
<proteinExistence type="inferred from homology"/>
<sequence length="512" mass="56971">MIKDMIDSIEQFAQTQADFPVYDCLGERRTYGQLKRDSDSIAAFIDSLALLAKSPVLVFGAQTYDMLATFVALTKSGHAYIPVDVHSAPERILAIIEIAKPSLIIAIEEFPLTIEGISLVSLSEIESAKLAEMPYERTHSVKGDDNYYIIFTSGTTGQPKGVQISHDNLLSFTNWMIEDAAFDVPKQPQMLAQPPYSFDLSVMYWAPTLALGGTLFALPKELVADFKQLFTTIAQLPVGIWTSTPSFADMAMLSDDFCQAKMPALTHFYFDGEELTVSTARKLFERFPSAKIINAYGPTEATVALSAIEITREMVDNYTRLPIGYPKPDSPTYIIDEDGKELASGEQGEIIVTGPAVSKGYLNNPEKTAEAFFTFKGQPAYHTGDIGSLTEDNILLYGGRLDFQIKYAGYRIELEDVSQQLNQSPMVASAVAVPRYNKEHKVQNLLAYIVVKDGVKERFDRELELTKAIKASVKDHMMSYMMPSKFLYRDSLPLTPNGKIDIKTLINEVNNR</sequence>
<comment type="function">
    <text evidence="1">Catalyzes the first step in the D-alanylation of lipoteichoic acid (LTA), the activation of D-alanine and its transfer onto the D-alanyl carrier protein (Dcp) DltC. In an ATP-dependent two-step reaction, forms a high energy D-alanyl-AMP intermediate, followed by transfer of the D-alanyl residue as a thiol ester to the phosphopantheinyl prosthetic group of the Dcp. D-alanylation of LTA plays an important role in modulating the properties of the cell wall in Gram-positive bacteria, influencing the net charge of the cell wall.</text>
</comment>
<comment type="catalytic activity">
    <reaction evidence="1">
        <text>holo-[D-alanyl-carrier protein] + D-alanine + ATP = D-alanyl-[D-alanyl-carrier protein] + AMP + diphosphate</text>
        <dbReference type="Rhea" id="RHEA:55132"/>
        <dbReference type="Rhea" id="RHEA-COMP:14102"/>
        <dbReference type="Rhea" id="RHEA-COMP:14103"/>
        <dbReference type="ChEBI" id="CHEBI:30616"/>
        <dbReference type="ChEBI" id="CHEBI:33019"/>
        <dbReference type="ChEBI" id="CHEBI:57416"/>
        <dbReference type="ChEBI" id="CHEBI:64479"/>
        <dbReference type="ChEBI" id="CHEBI:138620"/>
        <dbReference type="ChEBI" id="CHEBI:456215"/>
        <dbReference type="EC" id="6.2.1.54"/>
    </reaction>
</comment>
<comment type="pathway">
    <text evidence="1">Cell wall biogenesis; lipoteichoic acid biosynthesis.</text>
</comment>
<comment type="subcellular location">
    <subcellularLocation>
        <location evidence="1">Cytoplasm</location>
    </subcellularLocation>
</comment>
<comment type="similarity">
    <text evidence="1">Belongs to the ATP-dependent AMP-binding enzyme family. DltA subfamily.</text>
</comment>
<evidence type="ECO:0000255" key="1">
    <source>
        <dbReference type="HAMAP-Rule" id="MF_00593"/>
    </source>
</evidence>
<name>DLTA_STRPD</name>
<reference key="1">
    <citation type="journal article" date="2006" name="Proc. Natl. Acad. Sci. U.S.A.">
        <title>Molecular genetic anatomy of inter- and intraserotype variation in the human bacterial pathogen group A Streptococcus.</title>
        <authorList>
            <person name="Beres S.B."/>
            <person name="Richter E.W."/>
            <person name="Nagiec M.J."/>
            <person name="Sumby P."/>
            <person name="Porcella S.F."/>
            <person name="DeLeo F.R."/>
            <person name="Musser J.M."/>
        </authorList>
    </citation>
    <scope>NUCLEOTIDE SEQUENCE [LARGE SCALE GENOMIC DNA]</scope>
    <source>
        <strain>MGAS10270</strain>
    </source>
</reference>
<organism>
    <name type="scientific">Streptococcus pyogenes serotype M2 (strain MGAS10270)</name>
    <dbReference type="NCBI Taxonomy" id="370552"/>
    <lineage>
        <taxon>Bacteria</taxon>
        <taxon>Bacillati</taxon>
        <taxon>Bacillota</taxon>
        <taxon>Bacilli</taxon>
        <taxon>Lactobacillales</taxon>
        <taxon>Streptococcaceae</taxon>
        <taxon>Streptococcus</taxon>
    </lineage>
</organism>
<dbReference type="EC" id="6.2.1.54" evidence="1"/>
<dbReference type="EMBL" id="CP000260">
    <property type="protein sequence ID" value="ABF34194.1"/>
    <property type="molecule type" value="Genomic_DNA"/>
</dbReference>
<dbReference type="SMR" id="Q1JGF0"/>
<dbReference type="KEGG" id="sph:MGAS10270_Spy1129"/>
<dbReference type="HOGENOM" id="CLU_000022_2_12_9"/>
<dbReference type="UniPathway" id="UPA00556"/>
<dbReference type="Proteomes" id="UP000002436">
    <property type="component" value="Chromosome"/>
</dbReference>
<dbReference type="GO" id="GO:0005737">
    <property type="term" value="C:cytoplasm"/>
    <property type="evidence" value="ECO:0007669"/>
    <property type="project" value="UniProtKB-SubCell"/>
</dbReference>
<dbReference type="GO" id="GO:0005524">
    <property type="term" value="F:ATP binding"/>
    <property type="evidence" value="ECO:0007669"/>
    <property type="project" value="UniProtKB-KW"/>
</dbReference>
<dbReference type="GO" id="GO:0047473">
    <property type="term" value="F:D-alanine [D-alanyl carrier protein] ligase activity"/>
    <property type="evidence" value="ECO:0007669"/>
    <property type="project" value="UniProtKB-UniRule"/>
</dbReference>
<dbReference type="GO" id="GO:0070395">
    <property type="term" value="P:lipoteichoic acid biosynthetic process"/>
    <property type="evidence" value="ECO:0007669"/>
    <property type="project" value="UniProtKB-UniRule"/>
</dbReference>
<dbReference type="CDD" id="cd05945">
    <property type="entry name" value="DltA"/>
    <property type="match status" value="1"/>
</dbReference>
<dbReference type="FunFam" id="3.30.300.30:FF:000012">
    <property type="entry name" value="D-alanine--D-alanyl carrier protein ligase"/>
    <property type="match status" value="1"/>
</dbReference>
<dbReference type="Gene3D" id="3.30.300.30">
    <property type="match status" value="1"/>
</dbReference>
<dbReference type="Gene3D" id="3.40.50.12780">
    <property type="entry name" value="N-terminal domain of ligase-like"/>
    <property type="match status" value="1"/>
</dbReference>
<dbReference type="HAMAP" id="MF_00593">
    <property type="entry name" value="DltA"/>
    <property type="match status" value="1"/>
</dbReference>
<dbReference type="InterPro" id="IPR010071">
    <property type="entry name" value="AA_adenyl_dom"/>
</dbReference>
<dbReference type="InterPro" id="IPR025110">
    <property type="entry name" value="AMP-bd_C"/>
</dbReference>
<dbReference type="InterPro" id="IPR045851">
    <property type="entry name" value="AMP-bd_C_sf"/>
</dbReference>
<dbReference type="InterPro" id="IPR020845">
    <property type="entry name" value="AMP-binding_CS"/>
</dbReference>
<dbReference type="InterPro" id="IPR000873">
    <property type="entry name" value="AMP-dep_synth/lig_dom"/>
</dbReference>
<dbReference type="InterPro" id="IPR042099">
    <property type="entry name" value="ANL_N_sf"/>
</dbReference>
<dbReference type="InterPro" id="IPR010072">
    <property type="entry name" value="DltA"/>
</dbReference>
<dbReference type="InterPro" id="IPR044507">
    <property type="entry name" value="DltA-like"/>
</dbReference>
<dbReference type="NCBIfam" id="TIGR01733">
    <property type="entry name" value="AA-adenyl-dom"/>
    <property type="match status" value="1"/>
</dbReference>
<dbReference type="NCBIfam" id="TIGR01734">
    <property type="entry name" value="D-ala-DACP-lig"/>
    <property type="match status" value="1"/>
</dbReference>
<dbReference type="NCBIfam" id="NF003417">
    <property type="entry name" value="PRK04813.1"/>
    <property type="match status" value="1"/>
</dbReference>
<dbReference type="PANTHER" id="PTHR45398">
    <property type="match status" value="1"/>
</dbReference>
<dbReference type="PANTHER" id="PTHR45398:SF1">
    <property type="entry name" value="ENZYME, PUTATIVE (JCVI)-RELATED"/>
    <property type="match status" value="1"/>
</dbReference>
<dbReference type="Pfam" id="PF00501">
    <property type="entry name" value="AMP-binding"/>
    <property type="match status" value="1"/>
</dbReference>
<dbReference type="Pfam" id="PF13193">
    <property type="entry name" value="AMP-binding_C"/>
    <property type="match status" value="1"/>
</dbReference>
<dbReference type="SUPFAM" id="SSF56801">
    <property type="entry name" value="Acetyl-CoA synthetase-like"/>
    <property type="match status" value="1"/>
</dbReference>
<dbReference type="PROSITE" id="PS00455">
    <property type="entry name" value="AMP_BINDING"/>
    <property type="match status" value="1"/>
</dbReference>
<accession>Q1JGF0</accession>
<protein>
    <recommendedName>
        <fullName evidence="1">D-alanine--D-alanyl carrier protein ligase</fullName>
        <shortName evidence="1">DCL</shortName>
        <ecNumber evidence="1">6.2.1.54</ecNumber>
    </recommendedName>
    <alternativeName>
        <fullName evidence="1">D-alanine--poly(phosphoribitol) ligase subunit 1</fullName>
    </alternativeName>
    <alternativeName>
        <fullName evidence="1">D-alanine-activating enzyme</fullName>
        <shortName evidence="1">DAE</shortName>
    </alternativeName>
</protein>
<keyword id="KW-0067">ATP-binding</keyword>
<keyword id="KW-0963">Cytoplasm</keyword>
<keyword id="KW-0436">Ligase</keyword>
<keyword id="KW-0547">Nucleotide-binding</keyword>
<feature type="chain" id="PRO_1000025538" description="D-alanine--D-alanyl carrier protein ligase">
    <location>
        <begin position="1"/>
        <end position="512"/>
    </location>
</feature>
<feature type="binding site" evidence="1">
    <location>
        <begin position="152"/>
        <end position="153"/>
    </location>
    <ligand>
        <name>ATP</name>
        <dbReference type="ChEBI" id="CHEBI:30616"/>
    </ligand>
</feature>
<feature type="binding site" evidence="1">
    <location>
        <position position="199"/>
    </location>
    <ligand>
        <name>D-alanine</name>
        <dbReference type="ChEBI" id="CHEBI:57416"/>
    </ligand>
</feature>
<feature type="binding site" evidence="1">
    <location>
        <begin position="294"/>
        <end position="299"/>
    </location>
    <ligand>
        <name>ATP</name>
        <dbReference type="ChEBI" id="CHEBI:30616"/>
    </ligand>
</feature>
<feature type="binding site" evidence="1">
    <location>
        <position position="303"/>
    </location>
    <ligand>
        <name>D-alanine</name>
        <dbReference type="ChEBI" id="CHEBI:57416"/>
    </ligand>
</feature>
<feature type="binding site" evidence="1">
    <location>
        <position position="385"/>
    </location>
    <ligand>
        <name>ATP</name>
        <dbReference type="ChEBI" id="CHEBI:30616"/>
    </ligand>
</feature>
<feature type="binding site" evidence="1">
    <location>
        <begin position="397"/>
        <end position="400"/>
    </location>
    <ligand>
        <name>ATP</name>
        <dbReference type="ChEBI" id="CHEBI:30616"/>
    </ligand>
</feature>
<feature type="binding site" evidence="1">
    <location>
        <position position="499"/>
    </location>
    <ligand>
        <name>ATP</name>
        <dbReference type="ChEBI" id="CHEBI:30616"/>
    </ligand>
</feature>
<feature type="binding site" evidence="1">
    <location>
        <position position="499"/>
    </location>
    <ligand>
        <name>D-alanine</name>
        <dbReference type="ChEBI" id="CHEBI:57416"/>
    </ligand>
</feature>